<comment type="function">
    <text evidence="1">Converts N-acetylmannosamine-6-phosphate (ManNAc-6-P) to N-acetylglucosamine-6-phosphate (GlcNAc-6-P).</text>
</comment>
<comment type="catalytic activity">
    <reaction evidence="1">
        <text>an N-acyl-D-glucosamine 6-phosphate = an N-acyl-D-mannosamine 6-phosphate</text>
        <dbReference type="Rhea" id="RHEA:23932"/>
        <dbReference type="ChEBI" id="CHEBI:57599"/>
        <dbReference type="ChEBI" id="CHEBI:57666"/>
        <dbReference type="EC" id="5.1.3.9"/>
    </reaction>
</comment>
<comment type="pathway">
    <text evidence="1">Amino-sugar metabolism; N-acetylneuraminate degradation; D-fructose 6-phosphate from N-acetylneuraminate: step 3/5.</text>
</comment>
<comment type="similarity">
    <text evidence="1">Belongs to the NanE family.</text>
</comment>
<protein>
    <recommendedName>
        <fullName evidence="1">Putative N-acetylmannosamine-6-phosphate 2-epimerase</fullName>
        <ecNumber evidence="1">5.1.3.9</ecNumber>
    </recommendedName>
    <alternativeName>
        <fullName evidence="1">ManNAc-6-P epimerase</fullName>
    </alternativeName>
</protein>
<organism>
    <name type="scientific">Staphylococcus aureus (strain JH9)</name>
    <dbReference type="NCBI Taxonomy" id="359786"/>
    <lineage>
        <taxon>Bacteria</taxon>
        <taxon>Bacillati</taxon>
        <taxon>Bacillota</taxon>
        <taxon>Bacilli</taxon>
        <taxon>Bacillales</taxon>
        <taxon>Staphylococcaceae</taxon>
        <taxon>Staphylococcus</taxon>
    </lineage>
</organism>
<keyword id="KW-0119">Carbohydrate metabolism</keyword>
<keyword id="KW-0413">Isomerase</keyword>
<evidence type="ECO:0000255" key="1">
    <source>
        <dbReference type="HAMAP-Rule" id="MF_01235"/>
    </source>
</evidence>
<dbReference type="EC" id="5.1.3.9" evidence="1"/>
<dbReference type="EMBL" id="CP000703">
    <property type="protein sequence ID" value="ABQ48108.1"/>
    <property type="molecule type" value="Genomic_DNA"/>
</dbReference>
<dbReference type="RefSeq" id="WP_000936718.1">
    <property type="nucleotide sequence ID" value="NC_009487.1"/>
</dbReference>
<dbReference type="SMR" id="A5IPI5"/>
<dbReference type="KEGG" id="saj:SaurJH9_0301"/>
<dbReference type="HOGENOM" id="CLU_086300_1_0_9"/>
<dbReference type="UniPathway" id="UPA00629">
    <property type="reaction ID" value="UER00682"/>
</dbReference>
<dbReference type="GO" id="GO:0005829">
    <property type="term" value="C:cytosol"/>
    <property type="evidence" value="ECO:0007669"/>
    <property type="project" value="TreeGrafter"/>
</dbReference>
<dbReference type="GO" id="GO:0047465">
    <property type="term" value="F:N-acylglucosamine-6-phosphate 2-epimerase activity"/>
    <property type="evidence" value="ECO:0007669"/>
    <property type="project" value="UniProtKB-EC"/>
</dbReference>
<dbReference type="GO" id="GO:0005975">
    <property type="term" value="P:carbohydrate metabolic process"/>
    <property type="evidence" value="ECO:0007669"/>
    <property type="project" value="UniProtKB-UniRule"/>
</dbReference>
<dbReference type="GO" id="GO:0006053">
    <property type="term" value="P:N-acetylmannosamine catabolic process"/>
    <property type="evidence" value="ECO:0007669"/>
    <property type="project" value="TreeGrafter"/>
</dbReference>
<dbReference type="GO" id="GO:0019262">
    <property type="term" value="P:N-acetylneuraminate catabolic process"/>
    <property type="evidence" value="ECO:0007669"/>
    <property type="project" value="UniProtKB-UniRule"/>
</dbReference>
<dbReference type="CDD" id="cd04729">
    <property type="entry name" value="NanE"/>
    <property type="match status" value="1"/>
</dbReference>
<dbReference type="FunFam" id="3.20.20.70:FF:000035">
    <property type="entry name" value="Putative N-acetylmannosamine-6-phosphate 2-epimerase"/>
    <property type="match status" value="1"/>
</dbReference>
<dbReference type="Gene3D" id="3.20.20.70">
    <property type="entry name" value="Aldolase class I"/>
    <property type="match status" value="1"/>
</dbReference>
<dbReference type="HAMAP" id="MF_01235">
    <property type="entry name" value="ManNAc6P_epimer"/>
    <property type="match status" value="1"/>
</dbReference>
<dbReference type="InterPro" id="IPR013785">
    <property type="entry name" value="Aldolase_TIM"/>
</dbReference>
<dbReference type="InterPro" id="IPR007260">
    <property type="entry name" value="NanE"/>
</dbReference>
<dbReference type="InterPro" id="IPR011060">
    <property type="entry name" value="RibuloseP-bd_barrel"/>
</dbReference>
<dbReference type="NCBIfam" id="NF002231">
    <property type="entry name" value="PRK01130.1"/>
    <property type="match status" value="1"/>
</dbReference>
<dbReference type="PANTHER" id="PTHR36204">
    <property type="entry name" value="N-ACETYLMANNOSAMINE-6-PHOSPHATE 2-EPIMERASE-RELATED"/>
    <property type="match status" value="1"/>
</dbReference>
<dbReference type="PANTHER" id="PTHR36204:SF1">
    <property type="entry name" value="N-ACETYLMANNOSAMINE-6-PHOSPHATE 2-EPIMERASE-RELATED"/>
    <property type="match status" value="1"/>
</dbReference>
<dbReference type="Pfam" id="PF04131">
    <property type="entry name" value="NanE"/>
    <property type="match status" value="1"/>
</dbReference>
<dbReference type="SUPFAM" id="SSF51366">
    <property type="entry name" value="Ribulose-phoshate binding barrel"/>
    <property type="match status" value="1"/>
</dbReference>
<gene>
    <name evidence="1" type="primary">nanE</name>
    <name type="ordered locus">SaurJH9_0301</name>
</gene>
<proteinExistence type="inferred from homology"/>
<accession>A5IPI5</accession>
<feature type="chain" id="PRO_1000085731" description="Putative N-acetylmannosamine-6-phosphate 2-epimerase">
    <location>
        <begin position="1"/>
        <end position="222"/>
    </location>
</feature>
<name>NANE_STAA9</name>
<reference key="1">
    <citation type="submission" date="2007-05" db="EMBL/GenBank/DDBJ databases">
        <title>Complete sequence of chromosome of Staphylococcus aureus subsp. aureus JH9.</title>
        <authorList>
            <consortium name="US DOE Joint Genome Institute"/>
            <person name="Copeland A."/>
            <person name="Lucas S."/>
            <person name="Lapidus A."/>
            <person name="Barry K."/>
            <person name="Detter J.C."/>
            <person name="Glavina del Rio T."/>
            <person name="Hammon N."/>
            <person name="Israni S."/>
            <person name="Pitluck S."/>
            <person name="Chain P."/>
            <person name="Malfatti S."/>
            <person name="Shin M."/>
            <person name="Vergez L."/>
            <person name="Schmutz J."/>
            <person name="Larimer F."/>
            <person name="Land M."/>
            <person name="Hauser L."/>
            <person name="Kyrpides N."/>
            <person name="Kim E."/>
            <person name="Tomasz A."/>
            <person name="Richardson P."/>
        </authorList>
    </citation>
    <scope>NUCLEOTIDE SEQUENCE [LARGE SCALE GENOMIC DNA]</scope>
    <source>
        <strain>JH9</strain>
    </source>
</reference>
<sequence>MLPHGLIVSCQALADEPLHSSFIMSKMALAAYEGGAVGIRANTKEDILAIKETVDLPVIGIVKRDYDHSDVFITATSKEVDELIESQCEVIALDATLQQRPKETLDELVSYIRTHAPNVEIMADIATVEEAKNAARLGFDYIGTTLHGYTSYTQGQLLYQNDFQFLKDVLQSVDAKVIAEGNVITPDMYKRVMDLGVHCSVVGGAITRPKEITKRFVQVMED</sequence>